<name>RECO_VIBCH</name>
<sequence>MSDGLQRCFVLHRRPYSESSLILDVFSEEYGRVTLMAKGARGKRSNLKGALQPFTPLLLKWSGNGSMKTLRQAEPISLGLPLSGVYLYSAMYINELVDRVLMPEVASPGLFHDYLFALTELAQSTNPEPALRRFELALLAAMGYGVDFLHCAGTGEPVSPDMTYRYREQKGFIASVRRDNLTFLGNELIAISERRFTSKEQLQAAKRFTRLALKPYLGGKPLKSRELFRQTTLPRARSTEE</sequence>
<proteinExistence type="inferred from homology"/>
<gene>
    <name evidence="1" type="primary">recO</name>
    <name type="ordered locus">VC_2459</name>
</gene>
<dbReference type="EMBL" id="AE003852">
    <property type="protein sequence ID" value="AAF95601.1"/>
    <property type="molecule type" value="Genomic_DNA"/>
</dbReference>
<dbReference type="PIR" id="H82072">
    <property type="entry name" value="H82072"/>
</dbReference>
<dbReference type="RefSeq" id="NP_232088.1">
    <property type="nucleotide sequence ID" value="NC_002505.1"/>
</dbReference>
<dbReference type="RefSeq" id="WP_001279493.1">
    <property type="nucleotide sequence ID" value="NZ_LT906614.1"/>
</dbReference>
<dbReference type="SMR" id="Q9KPB4"/>
<dbReference type="STRING" id="243277.VC_2459"/>
<dbReference type="DNASU" id="2613001"/>
<dbReference type="EnsemblBacteria" id="AAF95601">
    <property type="protein sequence ID" value="AAF95601"/>
    <property type="gene ID" value="VC_2459"/>
</dbReference>
<dbReference type="GeneID" id="94012893"/>
<dbReference type="KEGG" id="vch:VC_2459"/>
<dbReference type="PATRIC" id="fig|243277.26.peg.2344"/>
<dbReference type="eggNOG" id="COG1381">
    <property type="taxonomic scope" value="Bacteria"/>
</dbReference>
<dbReference type="HOGENOM" id="CLU_066645_1_0_6"/>
<dbReference type="Proteomes" id="UP000000584">
    <property type="component" value="Chromosome 1"/>
</dbReference>
<dbReference type="GO" id="GO:0043590">
    <property type="term" value="C:bacterial nucleoid"/>
    <property type="evidence" value="ECO:0000318"/>
    <property type="project" value="GO_Central"/>
</dbReference>
<dbReference type="GO" id="GO:0006310">
    <property type="term" value="P:DNA recombination"/>
    <property type="evidence" value="ECO:0007669"/>
    <property type="project" value="UniProtKB-UniRule"/>
</dbReference>
<dbReference type="GO" id="GO:0006302">
    <property type="term" value="P:double-strand break repair"/>
    <property type="evidence" value="ECO:0000318"/>
    <property type="project" value="GO_Central"/>
</dbReference>
<dbReference type="Gene3D" id="2.40.50.140">
    <property type="entry name" value="Nucleic acid-binding proteins"/>
    <property type="match status" value="1"/>
</dbReference>
<dbReference type="Gene3D" id="1.20.1440.120">
    <property type="entry name" value="Recombination protein O, C-terminal domain"/>
    <property type="match status" value="1"/>
</dbReference>
<dbReference type="HAMAP" id="MF_00201">
    <property type="entry name" value="RecO"/>
    <property type="match status" value="1"/>
</dbReference>
<dbReference type="InterPro" id="IPR037278">
    <property type="entry name" value="ARFGAP/RecO"/>
</dbReference>
<dbReference type="InterPro" id="IPR022572">
    <property type="entry name" value="DNA_rep/recomb_RecO_N"/>
</dbReference>
<dbReference type="InterPro" id="IPR012340">
    <property type="entry name" value="NA-bd_OB-fold"/>
</dbReference>
<dbReference type="InterPro" id="IPR003717">
    <property type="entry name" value="RecO"/>
</dbReference>
<dbReference type="InterPro" id="IPR042242">
    <property type="entry name" value="RecO_C"/>
</dbReference>
<dbReference type="NCBIfam" id="TIGR00613">
    <property type="entry name" value="reco"/>
    <property type="match status" value="1"/>
</dbReference>
<dbReference type="PANTHER" id="PTHR33991">
    <property type="entry name" value="DNA REPAIR PROTEIN RECO"/>
    <property type="match status" value="1"/>
</dbReference>
<dbReference type="PANTHER" id="PTHR33991:SF1">
    <property type="entry name" value="DNA REPAIR PROTEIN RECO"/>
    <property type="match status" value="1"/>
</dbReference>
<dbReference type="Pfam" id="PF02565">
    <property type="entry name" value="RecO_C"/>
    <property type="match status" value="1"/>
</dbReference>
<dbReference type="Pfam" id="PF11967">
    <property type="entry name" value="RecO_N"/>
    <property type="match status" value="1"/>
</dbReference>
<dbReference type="SUPFAM" id="SSF57863">
    <property type="entry name" value="ArfGap/RecO-like zinc finger"/>
    <property type="match status" value="1"/>
</dbReference>
<dbReference type="SUPFAM" id="SSF50249">
    <property type="entry name" value="Nucleic acid-binding proteins"/>
    <property type="match status" value="1"/>
</dbReference>
<protein>
    <recommendedName>
        <fullName evidence="1">DNA repair protein RecO</fullName>
    </recommendedName>
    <alternativeName>
        <fullName evidence="1">Recombination protein O</fullName>
    </alternativeName>
</protein>
<organism>
    <name type="scientific">Vibrio cholerae serotype O1 (strain ATCC 39315 / El Tor Inaba N16961)</name>
    <dbReference type="NCBI Taxonomy" id="243277"/>
    <lineage>
        <taxon>Bacteria</taxon>
        <taxon>Pseudomonadati</taxon>
        <taxon>Pseudomonadota</taxon>
        <taxon>Gammaproteobacteria</taxon>
        <taxon>Vibrionales</taxon>
        <taxon>Vibrionaceae</taxon>
        <taxon>Vibrio</taxon>
    </lineage>
</organism>
<keyword id="KW-0227">DNA damage</keyword>
<keyword id="KW-0233">DNA recombination</keyword>
<keyword id="KW-0234">DNA repair</keyword>
<keyword id="KW-1185">Reference proteome</keyword>
<feature type="chain" id="PRO_0000205021" description="DNA repair protein RecO">
    <location>
        <begin position="1"/>
        <end position="241"/>
    </location>
</feature>
<accession>Q9KPB4</accession>
<reference key="1">
    <citation type="journal article" date="2000" name="Nature">
        <title>DNA sequence of both chromosomes of the cholera pathogen Vibrio cholerae.</title>
        <authorList>
            <person name="Heidelberg J.F."/>
            <person name="Eisen J.A."/>
            <person name="Nelson W.C."/>
            <person name="Clayton R.A."/>
            <person name="Gwinn M.L."/>
            <person name="Dodson R.J."/>
            <person name="Haft D.H."/>
            <person name="Hickey E.K."/>
            <person name="Peterson J.D."/>
            <person name="Umayam L.A."/>
            <person name="Gill S.R."/>
            <person name="Nelson K.E."/>
            <person name="Read T.D."/>
            <person name="Tettelin H."/>
            <person name="Richardson D.L."/>
            <person name="Ermolaeva M.D."/>
            <person name="Vamathevan J.J."/>
            <person name="Bass S."/>
            <person name="Qin H."/>
            <person name="Dragoi I."/>
            <person name="Sellers P."/>
            <person name="McDonald L.A."/>
            <person name="Utterback T.R."/>
            <person name="Fleischmann R.D."/>
            <person name="Nierman W.C."/>
            <person name="White O."/>
            <person name="Salzberg S.L."/>
            <person name="Smith H.O."/>
            <person name="Colwell R.R."/>
            <person name="Mekalanos J.J."/>
            <person name="Venter J.C."/>
            <person name="Fraser C.M."/>
        </authorList>
    </citation>
    <scope>NUCLEOTIDE SEQUENCE [LARGE SCALE GENOMIC DNA]</scope>
    <source>
        <strain>ATCC 39315 / El Tor Inaba N16961</strain>
    </source>
</reference>
<evidence type="ECO:0000255" key="1">
    <source>
        <dbReference type="HAMAP-Rule" id="MF_00201"/>
    </source>
</evidence>
<comment type="function">
    <text evidence="1">Involved in DNA repair and RecF pathway recombination.</text>
</comment>
<comment type="similarity">
    <text evidence="1">Belongs to the RecO family.</text>
</comment>